<reference key="1">
    <citation type="journal article" date="2000" name="Nature">
        <title>Sequence and analysis of chromosome 1 of the plant Arabidopsis thaliana.</title>
        <authorList>
            <person name="Theologis A."/>
            <person name="Ecker J.R."/>
            <person name="Palm C.J."/>
            <person name="Federspiel N.A."/>
            <person name="Kaul S."/>
            <person name="White O."/>
            <person name="Alonso J."/>
            <person name="Altafi H."/>
            <person name="Araujo R."/>
            <person name="Bowman C.L."/>
            <person name="Brooks S.Y."/>
            <person name="Buehler E."/>
            <person name="Chan A."/>
            <person name="Chao Q."/>
            <person name="Chen H."/>
            <person name="Cheuk R.F."/>
            <person name="Chin C.W."/>
            <person name="Chung M.K."/>
            <person name="Conn L."/>
            <person name="Conway A.B."/>
            <person name="Conway A.R."/>
            <person name="Creasy T.H."/>
            <person name="Dewar K."/>
            <person name="Dunn P."/>
            <person name="Etgu P."/>
            <person name="Feldblyum T.V."/>
            <person name="Feng J.-D."/>
            <person name="Fong B."/>
            <person name="Fujii C.Y."/>
            <person name="Gill J.E."/>
            <person name="Goldsmith A.D."/>
            <person name="Haas B."/>
            <person name="Hansen N.F."/>
            <person name="Hughes B."/>
            <person name="Huizar L."/>
            <person name="Hunter J.L."/>
            <person name="Jenkins J."/>
            <person name="Johnson-Hopson C."/>
            <person name="Khan S."/>
            <person name="Khaykin E."/>
            <person name="Kim C.J."/>
            <person name="Koo H.L."/>
            <person name="Kremenetskaia I."/>
            <person name="Kurtz D.B."/>
            <person name="Kwan A."/>
            <person name="Lam B."/>
            <person name="Langin-Hooper S."/>
            <person name="Lee A."/>
            <person name="Lee J.M."/>
            <person name="Lenz C.A."/>
            <person name="Li J.H."/>
            <person name="Li Y.-P."/>
            <person name="Lin X."/>
            <person name="Liu S.X."/>
            <person name="Liu Z.A."/>
            <person name="Luros J.S."/>
            <person name="Maiti R."/>
            <person name="Marziali A."/>
            <person name="Militscher J."/>
            <person name="Miranda M."/>
            <person name="Nguyen M."/>
            <person name="Nierman W.C."/>
            <person name="Osborne B.I."/>
            <person name="Pai G."/>
            <person name="Peterson J."/>
            <person name="Pham P.K."/>
            <person name="Rizzo M."/>
            <person name="Rooney T."/>
            <person name="Rowley D."/>
            <person name="Sakano H."/>
            <person name="Salzberg S.L."/>
            <person name="Schwartz J.R."/>
            <person name="Shinn P."/>
            <person name="Southwick A.M."/>
            <person name="Sun H."/>
            <person name="Tallon L.J."/>
            <person name="Tambunga G."/>
            <person name="Toriumi M.J."/>
            <person name="Town C.D."/>
            <person name="Utterback T."/>
            <person name="Van Aken S."/>
            <person name="Vaysberg M."/>
            <person name="Vysotskaia V.S."/>
            <person name="Walker M."/>
            <person name="Wu D."/>
            <person name="Yu G."/>
            <person name="Fraser C.M."/>
            <person name="Venter J.C."/>
            <person name="Davis R.W."/>
        </authorList>
    </citation>
    <scope>NUCLEOTIDE SEQUENCE [LARGE SCALE GENOMIC DNA]</scope>
    <source>
        <strain>cv. Columbia</strain>
    </source>
</reference>
<reference key="2">
    <citation type="journal article" date="2017" name="Plant J.">
        <title>Araport11: a complete reannotation of the Arabidopsis thaliana reference genome.</title>
        <authorList>
            <person name="Cheng C.Y."/>
            <person name="Krishnakumar V."/>
            <person name="Chan A.P."/>
            <person name="Thibaud-Nissen F."/>
            <person name="Schobel S."/>
            <person name="Town C.D."/>
        </authorList>
    </citation>
    <scope>GENOME REANNOTATION</scope>
    <source>
        <strain>cv. Columbia</strain>
    </source>
</reference>
<reference key="3">
    <citation type="journal article" date="2013" name="J. Exp. Bot.">
        <title>The CEP family in land plants: evolutionary analyses, expression studies, and role in Arabidopsis shoot development.</title>
        <authorList>
            <person name="Roberts I."/>
            <person name="Smith S."/>
            <person name="De Rybel B."/>
            <person name="Van Den Broeke J."/>
            <person name="Smet W."/>
            <person name="De Cokere S."/>
            <person name="Mispelaere M."/>
            <person name="De Smet I."/>
            <person name="Beeckman T."/>
        </authorList>
    </citation>
    <scope>GENE FAMILY</scope>
    <source>
        <strain>cv. Columbia</strain>
    </source>
</reference>
<reference key="4">
    <citation type="journal article" date="2013" name="J. Exp. Bot.">
        <title>CEP genes regulate root and shoot development in response to environmental cues and are specific to seed plants.</title>
        <authorList>
            <person name="Delay C."/>
            <person name="Imin N."/>
            <person name="Djordjevic M.A."/>
        </authorList>
    </citation>
    <scope>GENE FAMILY</scope>
    <scope>NOMENCLATURE</scope>
    <source>
        <strain>cv. Columbia</strain>
    </source>
</reference>
<protein>
    <recommendedName>
        <fullName evidence="5">Precursor of CEP10</fullName>
        <shortName evidence="5">PCEP10</shortName>
    </recommendedName>
    <component>
        <recommendedName>
            <fullName evidence="5">C-terminally encoded peptide 10.1</fullName>
            <shortName evidence="5">CEP10.1</shortName>
        </recommendedName>
    </component>
    <component>
        <recommendedName>
            <fullName evidence="5">C-terminally encoded peptide 10.2</fullName>
            <shortName evidence="5">CEP10.2</shortName>
        </recommendedName>
    </component>
    <component>
        <recommendedName>
            <fullName evidence="5">C-terminally encoded peptide 10.3</fullName>
            <shortName evidence="5">CEP10.3</shortName>
        </recommendedName>
    </component>
</protein>
<accession>Q9SKW7</accession>
<gene>
    <name evidence="5" type="primary">CEP10</name>
    <name evidence="6" type="ordered locus">At1g36045</name>
    <name evidence="7" type="ORF">F5J5.3</name>
    <name evidence="6" type="ORF">T22A15</name>
</gene>
<comment type="function">
    <text evidence="3">Extracellular signaling peptide that may regulate primary root growth rate and systemic nitrogen (N)-demand signaling.</text>
</comment>
<comment type="subunit">
    <text evidence="3">Interacts with CEP receptors (e.g. CEPR1 and CEPR2).</text>
</comment>
<comment type="subcellular location">
    <molecule>C-terminally encoded peptide 10.1</molecule>
    <subcellularLocation>
        <location evidence="1">Secreted</location>
        <location evidence="1">Extracellular space</location>
        <location evidence="1">Apoplast</location>
    </subcellularLocation>
    <text evidence="1">Accumulates in xylem sap.</text>
</comment>
<comment type="subcellular location">
    <molecule>C-terminally encoded peptide 10.2</molecule>
    <subcellularLocation>
        <location evidence="1">Secreted</location>
        <location evidence="1">Extracellular space</location>
        <location evidence="1">Apoplast</location>
    </subcellularLocation>
    <text evidence="1">Accumulates in xylem sap.</text>
</comment>
<comment type="subcellular location">
    <molecule>C-terminally encoded peptide 10.3</molecule>
    <subcellularLocation>
        <location evidence="1">Secreted</location>
        <location evidence="1">Extracellular space</location>
        <location evidence="1">Apoplast</location>
    </subcellularLocation>
    <text evidence="1">Accumulates in xylem sap.</text>
</comment>
<comment type="PTM">
    <text evidence="3">The mature small signaling peptide is generated by proteolytic processing of the longer precursor.</text>
</comment>
<comment type="similarity">
    <text evidence="6">Belongs to the C-terminally encoded plant signaling peptide (CEP) family.</text>
</comment>
<comment type="sequence caution" evidence="6">
    <conflict type="erroneous gene model prediction">
        <sequence resource="EMBL-CDS" id="AAF18632"/>
    </conflict>
</comment>
<dbReference type="EMBL" id="AC006228">
    <property type="protein sequence ID" value="AAF18632.1"/>
    <property type="status" value="ALT_SEQ"/>
    <property type="molecule type" value="Genomic_DNA"/>
</dbReference>
<dbReference type="EMBL" id="AC021666">
    <property type="status" value="NOT_ANNOTATED_CDS"/>
    <property type="molecule type" value="Genomic_DNA"/>
</dbReference>
<dbReference type="EMBL" id="CP002684">
    <property type="status" value="NOT_ANNOTATED_CDS"/>
    <property type="molecule type" value="Genomic_DNA"/>
</dbReference>
<dbReference type="PIR" id="D86482">
    <property type="entry name" value="D86482"/>
</dbReference>
<dbReference type="Araport" id="AT1G36045"/>
<dbReference type="TAIR" id="AT1G36045"/>
<dbReference type="InParanoid" id="Q9SKW7"/>
<dbReference type="PRO" id="PR:Q9SKW7"/>
<dbReference type="Proteomes" id="UP000006548">
    <property type="component" value="Chromosome 1"/>
</dbReference>
<dbReference type="ExpressionAtlas" id="Q9SKW7">
    <property type="expression patterns" value="baseline"/>
</dbReference>
<dbReference type="GO" id="GO:0048046">
    <property type="term" value="C:apoplast"/>
    <property type="evidence" value="ECO:0000250"/>
    <property type="project" value="UniProtKB"/>
</dbReference>
<dbReference type="GO" id="GO:0005576">
    <property type="term" value="C:extracellular region"/>
    <property type="evidence" value="ECO:0000318"/>
    <property type="project" value="GO_Central"/>
</dbReference>
<dbReference type="GO" id="GO:0005179">
    <property type="term" value="F:hormone activity"/>
    <property type="evidence" value="ECO:0000250"/>
    <property type="project" value="UniProtKB"/>
</dbReference>
<dbReference type="GO" id="GO:0006995">
    <property type="term" value="P:cellular response to nitrogen starvation"/>
    <property type="evidence" value="ECO:0007669"/>
    <property type="project" value="UniProtKB-ARBA"/>
</dbReference>
<dbReference type="GO" id="GO:1902025">
    <property type="term" value="P:nitrate import"/>
    <property type="evidence" value="ECO:0000250"/>
    <property type="project" value="UniProtKB"/>
</dbReference>
<dbReference type="GO" id="GO:1901371">
    <property type="term" value="P:regulation of leaf morphogenesis"/>
    <property type="evidence" value="ECO:0000318"/>
    <property type="project" value="GO_Central"/>
</dbReference>
<dbReference type="GO" id="GO:2000280">
    <property type="term" value="P:regulation of root development"/>
    <property type="evidence" value="ECO:0000250"/>
    <property type="project" value="UniProtKB"/>
</dbReference>
<dbReference type="GO" id="GO:0048364">
    <property type="term" value="P:root development"/>
    <property type="evidence" value="ECO:0007669"/>
    <property type="project" value="InterPro"/>
</dbReference>
<dbReference type="InterPro" id="IPR033250">
    <property type="entry name" value="CEP"/>
</dbReference>
<dbReference type="PANTHER" id="PTHR33348:SF21">
    <property type="entry name" value="PRECURSOR OF CEP10-RELATED"/>
    <property type="match status" value="1"/>
</dbReference>
<dbReference type="PANTHER" id="PTHR33348">
    <property type="entry name" value="PRECURSOR OF CEP5"/>
    <property type="match status" value="1"/>
</dbReference>
<proteinExistence type="inferred from homology"/>
<organism>
    <name type="scientific">Arabidopsis thaliana</name>
    <name type="common">Mouse-ear cress</name>
    <dbReference type="NCBI Taxonomy" id="3702"/>
    <lineage>
        <taxon>Eukaryota</taxon>
        <taxon>Viridiplantae</taxon>
        <taxon>Streptophyta</taxon>
        <taxon>Embryophyta</taxon>
        <taxon>Tracheophyta</taxon>
        <taxon>Spermatophyta</taxon>
        <taxon>Magnoliopsida</taxon>
        <taxon>eudicotyledons</taxon>
        <taxon>Gunneridae</taxon>
        <taxon>Pentapetalae</taxon>
        <taxon>rosids</taxon>
        <taxon>malvids</taxon>
        <taxon>Brassicales</taxon>
        <taxon>Brassicaceae</taxon>
        <taxon>Camelineae</taxon>
        <taxon>Arabidopsis</taxon>
    </lineage>
</organism>
<evidence type="ECO:0000250" key="1">
    <source>
        <dbReference type="UniProtKB" id="O80460"/>
    </source>
</evidence>
<evidence type="ECO:0000250" key="2">
    <source>
        <dbReference type="UniProtKB" id="Q058G9"/>
    </source>
</evidence>
<evidence type="ECO:0000250" key="3">
    <source>
        <dbReference type="UniProtKB" id="Q8L8Y3"/>
    </source>
</evidence>
<evidence type="ECO:0000255" key="4"/>
<evidence type="ECO:0000303" key="5">
    <source>
    </source>
</evidence>
<evidence type="ECO:0000305" key="6"/>
<evidence type="ECO:0000312" key="7">
    <source>
        <dbReference type="EMBL" id="AAF18632.1"/>
    </source>
</evidence>
<sequence length="132" mass="14794">MKLFIIIVVTSLTISKVFDKTLVTIEARNLRKMDRHEHFNANEDFVEAKMLKKIDNKNNLNNRCINDFAPTNPGHNSGIGHPKVINNKFTKDFAPTNPGHSPGIGHLRVVNNKFTNDFAPTNPGNSPGIRHP</sequence>
<name>PCP10_ARATH</name>
<keyword id="KW-0052">Apoplast</keyword>
<keyword id="KW-0217">Developmental protein</keyword>
<keyword id="KW-0372">Hormone</keyword>
<keyword id="KW-0379">Hydroxylation</keyword>
<keyword id="KW-1185">Reference proteome</keyword>
<keyword id="KW-0964">Secreted</keyword>
<keyword id="KW-0732">Signal</keyword>
<feature type="signal peptide" evidence="4">
    <location>
        <begin position="1"/>
        <end position="19"/>
    </location>
</feature>
<feature type="propeptide" id="PRO_0000439997" evidence="6">
    <location>
        <begin position="20"/>
        <end position="66"/>
    </location>
</feature>
<feature type="peptide" id="PRO_0000439998" description="C-terminally encoded peptide 10.1" evidence="2">
    <location>
        <begin position="67"/>
        <end position="81"/>
    </location>
</feature>
<feature type="propeptide" id="PRO_0000439999" evidence="6">
    <location>
        <begin position="82"/>
        <end position="91"/>
    </location>
</feature>
<feature type="peptide" id="PRO_0000440000" description="C-terminally encoded peptide 10.2" evidence="2">
    <location>
        <begin position="92"/>
        <end position="106"/>
    </location>
</feature>
<feature type="propeptide" id="PRO_0000440001" evidence="6">
    <location>
        <begin position="107"/>
        <end position="116"/>
    </location>
</feature>
<feature type="peptide" id="PRO_0000440002" description="C-terminally encoded peptide 10.3" evidence="2">
    <location>
        <begin position="117"/>
        <end position="131"/>
    </location>
</feature>
<feature type="propeptide" id="PRO_0000440003" evidence="6">
    <location>
        <position position="132"/>
    </location>
</feature>
<feature type="modified residue" description="Hydroxyproline" evidence="3">
    <location>
        <position position="70"/>
    </location>
</feature>
<feature type="modified residue" description="Hydroxyproline" evidence="2">
    <location>
        <position position="73"/>
    </location>
</feature>
<feature type="modified residue" description="Hydroxyproline" evidence="3">
    <location>
        <position position="95"/>
    </location>
</feature>
<feature type="modified residue" description="Hydroxyproline" evidence="2">
    <location>
        <position position="98"/>
    </location>
</feature>
<feature type="modified residue" description="Hydroxyproline" evidence="3">
    <location>
        <position position="102"/>
    </location>
</feature>
<feature type="modified residue" description="Hydroxyproline" evidence="3">
    <location>
        <position position="120"/>
    </location>
</feature>
<feature type="modified residue" description="Hydroxyproline" evidence="2">
    <location>
        <position position="123"/>
    </location>
</feature>
<feature type="modified residue" description="Hydroxyproline" evidence="3">
    <location>
        <position position="127"/>
    </location>
</feature>